<dbReference type="EMBL" id="CH954180">
    <property type="protein sequence ID" value="EDV47522.1"/>
    <property type="molecule type" value="Genomic_DNA"/>
</dbReference>
<dbReference type="RefSeq" id="XP_001978595.2">
    <property type="nucleotide sequence ID" value="XM_001978559.2"/>
</dbReference>
<dbReference type="SMR" id="B3NY01"/>
<dbReference type="EnsemblMetazoa" id="FBtr0412407">
    <property type="protein sequence ID" value="FBpp0370748"/>
    <property type="gene ID" value="FBgn0109817"/>
</dbReference>
<dbReference type="EnsemblMetazoa" id="XM_001978559.3">
    <property type="protein sequence ID" value="XP_001978595.3"/>
    <property type="gene ID" value="LOC6551615"/>
</dbReference>
<dbReference type="GeneID" id="6551615"/>
<dbReference type="KEGG" id="der:6551615"/>
<dbReference type="eggNOG" id="ENOG502QRB1">
    <property type="taxonomic scope" value="Eukaryota"/>
</dbReference>
<dbReference type="HOGENOM" id="CLU_477581_0_0_1"/>
<dbReference type="OMA" id="KICREEP"/>
<dbReference type="OrthoDB" id="7867651at2759"/>
<dbReference type="PhylomeDB" id="B3NY01"/>
<dbReference type="Proteomes" id="UP000008711">
    <property type="component" value="Unassembled WGS sequence"/>
</dbReference>
<dbReference type="InterPro" id="IPR006610">
    <property type="entry name" value="DM7"/>
</dbReference>
<dbReference type="SMART" id="SM00688">
    <property type="entry name" value="DM7"/>
    <property type="match status" value="2"/>
</dbReference>
<feature type="chain" id="PRO_0000378607" description="DM7 family protein GG17593">
    <location>
        <begin position="1"/>
        <end position="554"/>
    </location>
</feature>
<name>DM7B_DROER</name>
<reference evidence="2" key="1">
    <citation type="journal article" date="2007" name="Nature">
        <title>Evolution of genes and genomes on the Drosophila phylogeny.</title>
        <authorList>
            <consortium name="Drosophila 12 genomes consortium"/>
        </authorList>
    </citation>
    <scope>NUCLEOTIDE SEQUENCE [LARGE SCALE GENOMIC DNA]</scope>
    <source>
        <strain evidence="2">Tucson 14021-0224.01</strain>
    </source>
</reference>
<comment type="similarity">
    <text evidence="1">Belongs to the DM7 family.</text>
</comment>
<evidence type="ECO:0000255" key="1"/>
<evidence type="ECO:0000312" key="2">
    <source>
        <dbReference type="EMBL" id="EDV47522.1"/>
    </source>
</evidence>
<protein>
    <recommendedName>
        <fullName>DM7 family protein GG17593</fullName>
    </recommendedName>
</protein>
<organism>
    <name type="scientific">Drosophila erecta</name>
    <name type="common">Fruit fly</name>
    <dbReference type="NCBI Taxonomy" id="7220"/>
    <lineage>
        <taxon>Eukaryota</taxon>
        <taxon>Metazoa</taxon>
        <taxon>Ecdysozoa</taxon>
        <taxon>Arthropoda</taxon>
        <taxon>Hexapoda</taxon>
        <taxon>Insecta</taxon>
        <taxon>Pterygota</taxon>
        <taxon>Neoptera</taxon>
        <taxon>Endopterygota</taxon>
        <taxon>Diptera</taxon>
        <taxon>Brachycera</taxon>
        <taxon>Muscomorpha</taxon>
        <taxon>Ephydroidea</taxon>
        <taxon>Drosophilidae</taxon>
        <taxon>Drosophila</taxon>
        <taxon>Sophophora</taxon>
    </lineage>
</organism>
<proteinExistence type="inferred from homology"/>
<sequence length="554" mass="62111">MNRRGNSMGKPMTAMLQMQAVHRDESQVVELKKTSYFPYLFNLVMPKMFYHSPNRIVVARLYLDVHTHDKQAAEYFEGFQTPCFEVPASLFPGEVPLDKIVFMPTVMLPMGFEAGGVFGPGVLPPSSYPVDLIASGHKGETPPLFVGLRCLYVHLPLEIESLLDKMGEFPASQNALVYKLHPSDHLLQKENPQELMLRPDFTLSMIYNIPAPPPPPSPYPYRHVPVQYNIYTPDLSKVLMLMPHQRNLTVAILSTVNNPHVPSVALATMGDEECPKFELPSDVFPICEGVNRPIFLPRRFLPKGFESGCVFKPGSLSELWFVNYIGRFATPQPQHTCAITPPLFVGKYCRGEGAISMFKEIQLESKKQNCNVDQSLAEGSLKAVEPKRAHVPLTKGFFVMETEHPTPPEGAHCLQSYQQASDEGCLVKVKKDEDAEITESQEKDKVYPTKVASKSENEKKYLSCFKVDSDIELVADATADMGPAEMSLLVKEKDLPGINGACVLSQLSQVLVDRDQIRSHTDQLIHNHIYRMDRDRMLALRQPIHMCSGCGTLH</sequence>
<gene>
    <name type="ORF">GG17593</name>
</gene>
<keyword id="KW-0677">Repeat</keyword>
<accession>B3NY01</accession>